<gene>
    <name evidence="1" type="primary">ribH</name>
    <name type="ordered locus">BU459</name>
</gene>
<name>RISB_BUCAI</name>
<feature type="chain" id="PRO_0000134730" description="6,7-dimethyl-8-ribityllumazine synthase">
    <location>
        <begin position="1"/>
        <end position="160"/>
    </location>
</feature>
<feature type="active site" description="Proton donor" evidence="1">
    <location>
        <position position="89"/>
    </location>
</feature>
<feature type="binding site" evidence="1">
    <location>
        <position position="22"/>
    </location>
    <ligand>
        <name>5-amino-6-(D-ribitylamino)uracil</name>
        <dbReference type="ChEBI" id="CHEBI:15934"/>
    </ligand>
</feature>
<feature type="binding site" evidence="1">
    <location>
        <begin position="57"/>
        <end position="59"/>
    </location>
    <ligand>
        <name>5-amino-6-(D-ribitylamino)uracil</name>
        <dbReference type="ChEBI" id="CHEBI:15934"/>
    </ligand>
</feature>
<feature type="binding site" evidence="1">
    <location>
        <begin position="81"/>
        <end position="83"/>
    </location>
    <ligand>
        <name>5-amino-6-(D-ribitylamino)uracil</name>
        <dbReference type="ChEBI" id="CHEBI:15934"/>
    </ligand>
</feature>
<feature type="binding site" evidence="1">
    <location>
        <begin position="86"/>
        <end position="87"/>
    </location>
    <ligand>
        <name>(2S)-2-hydroxy-3-oxobutyl phosphate</name>
        <dbReference type="ChEBI" id="CHEBI:58830"/>
    </ligand>
</feature>
<feature type="binding site" evidence="1">
    <location>
        <position position="114"/>
    </location>
    <ligand>
        <name>5-amino-6-(D-ribitylamino)uracil</name>
        <dbReference type="ChEBI" id="CHEBI:15934"/>
    </ligand>
</feature>
<feature type="binding site" evidence="1">
    <location>
        <position position="128"/>
    </location>
    <ligand>
        <name>(2S)-2-hydroxy-3-oxobutyl phosphate</name>
        <dbReference type="ChEBI" id="CHEBI:58830"/>
    </ligand>
</feature>
<reference key="1">
    <citation type="journal article" date="2000" name="Nature">
        <title>Genome sequence of the endocellular bacterial symbiont of aphids Buchnera sp. APS.</title>
        <authorList>
            <person name="Shigenobu S."/>
            <person name="Watanabe H."/>
            <person name="Hattori M."/>
            <person name="Sakaki Y."/>
            <person name="Ishikawa H."/>
        </authorList>
    </citation>
    <scope>NUCLEOTIDE SEQUENCE [LARGE SCALE GENOMIC DNA]</scope>
    <source>
        <strain>APS</strain>
    </source>
</reference>
<reference key="2">
    <citation type="journal article" date="1999" name="J. Insect Physiol.">
        <title>Provision of riboflavin to the host aphid, Acyrthosiphon pisum, by endosymbiotic bacteria, Buchnera.</title>
        <authorList>
            <person name="Nakabachi A."/>
            <person name="Ishikawa H."/>
        </authorList>
    </citation>
    <scope>NUCLEOTIDE SEQUENCE [GENOMIC DNA] OF 44-160</scope>
</reference>
<accession>Q9ZNM0</accession>
<organism>
    <name type="scientific">Buchnera aphidicola subsp. Acyrthosiphon pisum (strain APS)</name>
    <name type="common">Acyrthosiphon pisum symbiotic bacterium</name>
    <dbReference type="NCBI Taxonomy" id="107806"/>
    <lineage>
        <taxon>Bacteria</taxon>
        <taxon>Pseudomonadati</taxon>
        <taxon>Pseudomonadota</taxon>
        <taxon>Gammaproteobacteria</taxon>
        <taxon>Enterobacterales</taxon>
        <taxon>Erwiniaceae</taxon>
        <taxon>Buchnera</taxon>
    </lineage>
</organism>
<sequence>MNIIQSGITAENSSIAIIIARFNEFINKNLLLGALDTLKRIGQVHEENILKIYVPGTYEIPTIASYIAKSGKYDAIIAIGTIIKGQTDHFKYIANDTSSSLSRISAQYFLPITLGILTTKNIEQSIERSGTKMGNKGSDAALAALEMINVMKKLKKVIYY</sequence>
<comment type="function">
    <text evidence="1">Catalyzes the formation of 6,7-dimethyl-8-ribityllumazine by condensation of 5-amino-6-(D-ribitylamino)uracil with 3,4-dihydroxy-2-butanone 4-phosphate. This is the penultimate step in the biosynthesis of riboflavin.</text>
</comment>
<comment type="catalytic activity">
    <reaction evidence="1">
        <text>(2S)-2-hydroxy-3-oxobutyl phosphate + 5-amino-6-(D-ribitylamino)uracil = 6,7-dimethyl-8-(1-D-ribityl)lumazine + phosphate + 2 H2O + H(+)</text>
        <dbReference type="Rhea" id="RHEA:26152"/>
        <dbReference type="ChEBI" id="CHEBI:15377"/>
        <dbReference type="ChEBI" id="CHEBI:15378"/>
        <dbReference type="ChEBI" id="CHEBI:15934"/>
        <dbReference type="ChEBI" id="CHEBI:43474"/>
        <dbReference type="ChEBI" id="CHEBI:58201"/>
        <dbReference type="ChEBI" id="CHEBI:58830"/>
        <dbReference type="EC" id="2.5.1.78"/>
    </reaction>
</comment>
<comment type="pathway">
    <text evidence="1">Cofactor biosynthesis; riboflavin biosynthesis; riboflavin from 2-hydroxy-3-oxobutyl phosphate and 5-amino-6-(D-ribitylamino)uracil: step 1/2.</text>
</comment>
<comment type="subunit">
    <text evidence="1">Forms an icosahedral capsid composed of 60 subunits, arranged as a dodecamer of pentamers.</text>
</comment>
<comment type="similarity">
    <text evidence="1">Belongs to the DMRL synthase family.</text>
</comment>
<keyword id="KW-1185">Reference proteome</keyword>
<keyword id="KW-0686">Riboflavin biosynthesis</keyword>
<keyword id="KW-0808">Transferase</keyword>
<proteinExistence type="evidence at transcript level"/>
<protein>
    <recommendedName>
        <fullName evidence="1">6,7-dimethyl-8-ribityllumazine synthase</fullName>
        <shortName evidence="1">DMRL synthase</shortName>
        <shortName evidence="1">LS</shortName>
        <shortName evidence="1">Lumazine synthase</shortName>
        <ecNumber evidence="1">2.5.1.78</ecNumber>
    </recommendedName>
</protein>
<dbReference type="EC" id="2.5.1.78" evidence="1"/>
<dbReference type="EMBL" id="BA000003">
    <property type="protein sequence ID" value="BAB13156.1"/>
    <property type="molecule type" value="Genomic_DNA"/>
</dbReference>
<dbReference type="EMBL" id="AB011407">
    <property type="protein sequence ID" value="BAA74435.1"/>
    <property type="molecule type" value="mRNA"/>
</dbReference>
<dbReference type="RefSeq" id="NP_240270.1">
    <property type="nucleotide sequence ID" value="NC_002528.1"/>
</dbReference>
<dbReference type="RefSeq" id="WP_010896128.1">
    <property type="nucleotide sequence ID" value="NC_002528.1"/>
</dbReference>
<dbReference type="SMR" id="Q9ZNM0"/>
<dbReference type="STRING" id="563178.BUAP5A_452"/>
<dbReference type="EnsemblBacteria" id="BAB13156">
    <property type="protein sequence ID" value="BAB13156"/>
    <property type="gene ID" value="BAB13156"/>
</dbReference>
<dbReference type="KEGG" id="buc:BU459"/>
<dbReference type="PATRIC" id="fig|107806.10.peg.468"/>
<dbReference type="eggNOG" id="COG0054">
    <property type="taxonomic scope" value="Bacteria"/>
</dbReference>
<dbReference type="HOGENOM" id="CLU_089358_1_1_6"/>
<dbReference type="BRENDA" id="2.5.1.78">
    <property type="organism ID" value="1015"/>
</dbReference>
<dbReference type="UniPathway" id="UPA00275">
    <property type="reaction ID" value="UER00404"/>
</dbReference>
<dbReference type="Proteomes" id="UP000001806">
    <property type="component" value="Chromosome"/>
</dbReference>
<dbReference type="GO" id="GO:0005829">
    <property type="term" value="C:cytosol"/>
    <property type="evidence" value="ECO:0007669"/>
    <property type="project" value="TreeGrafter"/>
</dbReference>
<dbReference type="GO" id="GO:0009349">
    <property type="term" value="C:riboflavin synthase complex"/>
    <property type="evidence" value="ECO:0007669"/>
    <property type="project" value="InterPro"/>
</dbReference>
<dbReference type="GO" id="GO:0000906">
    <property type="term" value="F:6,7-dimethyl-8-ribityllumazine synthase activity"/>
    <property type="evidence" value="ECO:0007669"/>
    <property type="project" value="UniProtKB-UniRule"/>
</dbReference>
<dbReference type="GO" id="GO:0009231">
    <property type="term" value="P:riboflavin biosynthetic process"/>
    <property type="evidence" value="ECO:0007669"/>
    <property type="project" value="UniProtKB-UniRule"/>
</dbReference>
<dbReference type="CDD" id="cd09209">
    <property type="entry name" value="Lumazine_synthase-I"/>
    <property type="match status" value="1"/>
</dbReference>
<dbReference type="Gene3D" id="3.40.50.960">
    <property type="entry name" value="Lumazine/riboflavin synthase"/>
    <property type="match status" value="1"/>
</dbReference>
<dbReference type="HAMAP" id="MF_00178">
    <property type="entry name" value="Lumazine_synth"/>
    <property type="match status" value="1"/>
</dbReference>
<dbReference type="InterPro" id="IPR034964">
    <property type="entry name" value="LS"/>
</dbReference>
<dbReference type="InterPro" id="IPR002180">
    <property type="entry name" value="LS/RS"/>
</dbReference>
<dbReference type="InterPro" id="IPR036467">
    <property type="entry name" value="LS/RS_sf"/>
</dbReference>
<dbReference type="NCBIfam" id="TIGR00114">
    <property type="entry name" value="lumazine-synth"/>
    <property type="match status" value="1"/>
</dbReference>
<dbReference type="NCBIfam" id="NF000812">
    <property type="entry name" value="PRK00061.1-4"/>
    <property type="match status" value="1"/>
</dbReference>
<dbReference type="PANTHER" id="PTHR21058:SF0">
    <property type="entry name" value="6,7-DIMETHYL-8-RIBITYLLUMAZINE SYNTHASE"/>
    <property type="match status" value="1"/>
</dbReference>
<dbReference type="PANTHER" id="PTHR21058">
    <property type="entry name" value="6,7-DIMETHYL-8-RIBITYLLUMAZINE SYNTHASE DMRL SYNTHASE LUMAZINE SYNTHASE"/>
    <property type="match status" value="1"/>
</dbReference>
<dbReference type="Pfam" id="PF00885">
    <property type="entry name" value="DMRL_synthase"/>
    <property type="match status" value="1"/>
</dbReference>
<dbReference type="SUPFAM" id="SSF52121">
    <property type="entry name" value="Lumazine synthase"/>
    <property type="match status" value="1"/>
</dbReference>
<evidence type="ECO:0000255" key="1">
    <source>
        <dbReference type="HAMAP-Rule" id="MF_00178"/>
    </source>
</evidence>